<name>RUVA_RHOBA</name>
<protein>
    <recommendedName>
        <fullName evidence="1">Holliday junction branch migration complex subunit RuvA</fullName>
    </recommendedName>
</protein>
<sequence length="207" mass="22713">MIVSIAGKLVQVGEISVIIQAAPFDYEVYVGDYTRRQLQNQIGNEVRLHTLDYIEGNAQGGRLTPRLIGFSTLPERQFFDLFCSVDGVGVKKALRAMVRPVKELAVLIEEQDAKTLSALPGIGPATSEKVIAKLRRKMPRFALMVAGGEVADAMEVESPIVSDTYDALVTLGHSESDARKLIDETLATGKKFKDTESLLTAIYQRSK</sequence>
<proteinExistence type="inferred from homology"/>
<gene>
    <name evidence="1" type="primary">ruvA</name>
    <name type="ordered locus">RB4610</name>
</gene>
<feature type="chain" id="PRO_1000195174" description="Holliday junction branch migration complex subunit RuvA">
    <location>
        <begin position="1"/>
        <end position="207"/>
    </location>
</feature>
<feature type="region of interest" description="Domain I" evidence="1">
    <location>
        <begin position="1"/>
        <end position="71"/>
    </location>
</feature>
<feature type="region of interest" description="Domain II" evidence="1">
    <location>
        <begin position="72"/>
        <end position="149"/>
    </location>
</feature>
<feature type="region of interest" description="Flexible linker" evidence="1">
    <location>
        <begin position="150"/>
        <end position="155"/>
    </location>
</feature>
<feature type="region of interest" description="Domain III" evidence="1">
    <location>
        <begin position="156"/>
        <end position="207"/>
    </location>
</feature>
<accession>Q7USB0</accession>
<comment type="function">
    <text evidence="1">The RuvA-RuvB-RuvC complex processes Holliday junction (HJ) DNA during genetic recombination and DNA repair, while the RuvA-RuvB complex plays an important role in the rescue of blocked DNA replication forks via replication fork reversal (RFR). RuvA specifically binds to HJ cruciform DNA, conferring on it an open structure. The RuvB hexamer acts as an ATP-dependent pump, pulling dsDNA into and through the RuvAB complex. HJ branch migration allows RuvC to scan DNA until it finds its consensus sequence, where it cleaves and resolves the cruciform DNA.</text>
</comment>
<comment type="subunit">
    <text evidence="1">Homotetramer. Forms an RuvA(8)-RuvB(12)-Holliday junction (HJ) complex. HJ DNA is sandwiched between 2 RuvA tetramers; dsDNA enters through RuvA and exits via RuvB. An RuvB hexamer assembles on each DNA strand where it exits the tetramer. Each RuvB hexamer is contacted by two RuvA subunits (via domain III) on 2 adjacent RuvB subunits; this complex drives branch migration. In the full resolvosome a probable DNA-RuvA(4)-RuvB(12)-RuvC(2) complex forms which resolves the HJ.</text>
</comment>
<comment type="subcellular location">
    <subcellularLocation>
        <location evidence="1">Cytoplasm</location>
    </subcellularLocation>
</comment>
<comment type="domain">
    <text evidence="1">Has three domains with a flexible linker between the domains II and III and assumes an 'L' shape. Domain III is highly mobile and contacts RuvB.</text>
</comment>
<comment type="similarity">
    <text evidence="1">Belongs to the RuvA family.</text>
</comment>
<organism>
    <name type="scientific">Rhodopirellula baltica (strain DSM 10527 / NCIMB 13988 / SH1)</name>
    <dbReference type="NCBI Taxonomy" id="243090"/>
    <lineage>
        <taxon>Bacteria</taxon>
        <taxon>Pseudomonadati</taxon>
        <taxon>Planctomycetota</taxon>
        <taxon>Planctomycetia</taxon>
        <taxon>Pirellulales</taxon>
        <taxon>Pirellulaceae</taxon>
        <taxon>Rhodopirellula</taxon>
    </lineage>
</organism>
<reference key="1">
    <citation type="journal article" date="2003" name="Proc. Natl. Acad. Sci. U.S.A.">
        <title>Complete genome sequence of the marine planctomycete Pirellula sp. strain 1.</title>
        <authorList>
            <person name="Gloeckner F.O."/>
            <person name="Kube M."/>
            <person name="Bauer M."/>
            <person name="Teeling H."/>
            <person name="Lombardot T."/>
            <person name="Ludwig W."/>
            <person name="Gade D."/>
            <person name="Beck A."/>
            <person name="Borzym K."/>
            <person name="Heitmann K."/>
            <person name="Rabus R."/>
            <person name="Schlesner H."/>
            <person name="Amann R."/>
            <person name="Reinhardt R."/>
        </authorList>
    </citation>
    <scope>NUCLEOTIDE SEQUENCE [LARGE SCALE GENOMIC DNA]</scope>
    <source>
        <strain>DSM 10527 / NCIMB 13988 / SH1</strain>
    </source>
</reference>
<dbReference type="EMBL" id="BX294140">
    <property type="protein sequence ID" value="CAD73887.1"/>
    <property type="molecule type" value="Genomic_DNA"/>
</dbReference>
<dbReference type="RefSeq" id="NP_866201.1">
    <property type="nucleotide sequence ID" value="NC_005027.1"/>
</dbReference>
<dbReference type="RefSeq" id="WP_007326966.1">
    <property type="nucleotide sequence ID" value="NC_005027.1"/>
</dbReference>
<dbReference type="SMR" id="Q7USB0"/>
<dbReference type="FunCoup" id="Q7USB0">
    <property type="interactions" value="218"/>
</dbReference>
<dbReference type="STRING" id="243090.RB4610"/>
<dbReference type="EnsemblBacteria" id="CAD73887">
    <property type="protein sequence ID" value="CAD73887"/>
    <property type="gene ID" value="RB4610"/>
</dbReference>
<dbReference type="KEGG" id="rba:RB4610"/>
<dbReference type="PATRIC" id="fig|243090.15.peg.2161"/>
<dbReference type="eggNOG" id="COG0632">
    <property type="taxonomic scope" value="Bacteria"/>
</dbReference>
<dbReference type="HOGENOM" id="CLU_087936_3_0_0"/>
<dbReference type="InParanoid" id="Q7USB0"/>
<dbReference type="OrthoDB" id="5293449at2"/>
<dbReference type="Proteomes" id="UP000001025">
    <property type="component" value="Chromosome"/>
</dbReference>
<dbReference type="GO" id="GO:0005737">
    <property type="term" value="C:cytoplasm"/>
    <property type="evidence" value="ECO:0007669"/>
    <property type="project" value="UniProtKB-SubCell"/>
</dbReference>
<dbReference type="GO" id="GO:0048476">
    <property type="term" value="C:Holliday junction resolvase complex"/>
    <property type="evidence" value="ECO:0007669"/>
    <property type="project" value="UniProtKB-UniRule"/>
</dbReference>
<dbReference type="GO" id="GO:0005524">
    <property type="term" value="F:ATP binding"/>
    <property type="evidence" value="ECO:0007669"/>
    <property type="project" value="InterPro"/>
</dbReference>
<dbReference type="GO" id="GO:0000400">
    <property type="term" value="F:four-way junction DNA binding"/>
    <property type="evidence" value="ECO:0007669"/>
    <property type="project" value="UniProtKB-UniRule"/>
</dbReference>
<dbReference type="GO" id="GO:0009378">
    <property type="term" value="F:four-way junction helicase activity"/>
    <property type="evidence" value="ECO:0000318"/>
    <property type="project" value="GO_Central"/>
</dbReference>
<dbReference type="GO" id="GO:0006310">
    <property type="term" value="P:DNA recombination"/>
    <property type="evidence" value="ECO:0007669"/>
    <property type="project" value="UniProtKB-UniRule"/>
</dbReference>
<dbReference type="GO" id="GO:0006281">
    <property type="term" value="P:DNA repair"/>
    <property type="evidence" value="ECO:0007669"/>
    <property type="project" value="UniProtKB-UniRule"/>
</dbReference>
<dbReference type="GO" id="GO:0009432">
    <property type="term" value="P:SOS response"/>
    <property type="evidence" value="ECO:0000318"/>
    <property type="project" value="GO_Central"/>
</dbReference>
<dbReference type="Gene3D" id="1.10.150.20">
    <property type="entry name" value="5' to 3' exonuclease, C-terminal subdomain"/>
    <property type="match status" value="1"/>
</dbReference>
<dbReference type="Gene3D" id="1.10.8.10">
    <property type="entry name" value="DNA helicase RuvA subunit, C-terminal domain"/>
    <property type="match status" value="1"/>
</dbReference>
<dbReference type="Gene3D" id="2.40.50.140">
    <property type="entry name" value="Nucleic acid-binding proteins"/>
    <property type="match status" value="1"/>
</dbReference>
<dbReference type="HAMAP" id="MF_00031">
    <property type="entry name" value="DNA_HJ_migration_RuvA"/>
    <property type="match status" value="1"/>
</dbReference>
<dbReference type="InterPro" id="IPR013849">
    <property type="entry name" value="DNA_helicase_Holl-junc_RuvA_I"/>
</dbReference>
<dbReference type="InterPro" id="IPR012340">
    <property type="entry name" value="NA-bd_OB-fold"/>
</dbReference>
<dbReference type="InterPro" id="IPR000085">
    <property type="entry name" value="RuvA"/>
</dbReference>
<dbReference type="InterPro" id="IPR010994">
    <property type="entry name" value="RuvA_2-like"/>
</dbReference>
<dbReference type="NCBIfam" id="TIGR00084">
    <property type="entry name" value="ruvA"/>
    <property type="match status" value="1"/>
</dbReference>
<dbReference type="Pfam" id="PF14520">
    <property type="entry name" value="HHH_5"/>
    <property type="match status" value="1"/>
</dbReference>
<dbReference type="Pfam" id="PF01330">
    <property type="entry name" value="RuvA_N"/>
    <property type="match status" value="1"/>
</dbReference>
<dbReference type="SUPFAM" id="SSF47781">
    <property type="entry name" value="RuvA domain 2-like"/>
    <property type="match status" value="1"/>
</dbReference>
<evidence type="ECO:0000255" key="1">
    <source>
        <dbReference type="HAMAP-Rule" id="MF_00031"/>
    </source>
</evidence>
<keyword id="KW-0963">Cytoplasm</keyword>
<keyword id="KW-0227">DNA damage</keyword>
<keyword id="KW-0233">DNA recombination</keyword>
<keyword id="KW-0234">DNA repair</keyword>
<keyword id="KW-0238">DNA-binding</keyword>
<keyword id="KW-1185">Reference proteome</keyword>